<proteinExistence type="inferred from homology"/>
<dbReference type="EMBL" id="AL591688">
    <property type="protein sequence ID" value="CAC47247.1"/>
    <property type="molecule type" value="Genomic_DNA"/>
</dbReference>
<dbReference type="RefSeq" id="NP_386774.1">
    <property type="nucleotide sequence ID" value="NC_003047.1"/>
</dbReference>
<dbReference type="RefSeq" id="WP_003527451.1">
    <property type="nucleotide sequence ID" value="NC_003047.1"/>
</dbReference>
<dbReference type="SMR" id="Q92MF4"/>
<dbReference type="EnsemblBacteria" id="CAC47247">
    <property type="protein sequence ID" value="CAC47247"/>
    <property type="gene ID" value="SMc00704"/>
</dbReference>
<dbReference type="GeneID" id="89577075"/>
<dbReference type="KEGG" id="sme:SMc00704"/>
<dbReference type="PATRIC" id="fig|266834.11.peg.4170"/>
<dbReference type="eggNOG" id="COG0227">
    <property type="taxonomic scope" value="Bacteria"/>
</dbReference>
<dbReference type="HOGENOM" id="CLU_064548_4_2_5"/>
<dbReference type="OrthoDB" id="9805609at2"/>
<dbReference type="Proteomes" id="UP000001976">
    <property type="component" value="Chromosome"/>
</dbReference>
<dbReference type="GO" id="GO:0022625">
    <property type="term" value="C:cytosolic large ribosomal subunit"/>
    <property type="evidence" value="ECO:0007669"/>
    <property type="project" value="TreeGrafter"/>
</dbReference>
<dbReference type="GO" id="GO:0003735">
    <property type="term" value="F:structural constituent of ribosome"/>
    <property type="evidence" value="ECO:0007669"/>
    <property type="project" value="InterPro"/>
</dbReference>
<dbReference type="GO" id="GO:0006412">
    <property type="term" value="P:translation"/>
    <property type="evidence" value="ECO:0007669"/>
    <property type="project" value="UniProtKB-UniRule"/>
</dbReference>
<dbReference type="Gene3D" id="2.30.170.40">
    <property type="entry name" value="Ribosomal protein L28/L24"/>
    <property type="match status" value="1"/>
</dbReference>
<dbReference type="HAMAP" id="MF_00373">
    <property type="entry name" value="Ribosomal_bL28"/>
    <property type="match status" value="1"/>
</dbReference>
<dbReference type="InterPro" id="IPR026569">
    <property type="entry name" value="Ribosomal_bL28"/>
</dbReference>
<dbReference type="InterPro" id="IPR034704">
    <property type="entry name" value="Ribosomal_bL28/bL31-like_sf"/>
</dbReference>
<dbReference type="InterPro" id="IPR001383">
    <property type="entry name" value="Ribosomal_bL28_bact-type"/>
</dbReference>
<dbReference type="InterPro" id="IPR037147">
    <property type="entry name" value="Ribosomal_bL28_sf"/>
</dbReference>
<dbReference type="NCBIfam" id="TIGR00009">
    <property type="entry name" value="L28"/>
    <property type="match status" value="1"/>
</dbReference>
<dbReference type="PANTHER" id="PTHR13528">
    <property type="entry name" value="39S RIBOSOMAL PROTEIN L28, MITOCHONDRIAL"/>
    <property type="match status" value="1"/>
</dbReference>
<dbReference type="PANTHER" id="PTHR13528:SF2">
    <property type="entry name" value="LARGE RIBOSOMAL SUBUNIT PROTEIN BL28M"/>
    <property type="match status" value="1"/>
</dbReference>
<dbReference type="Pfam" id="PF00830">
    <property type="entry name" value="Ribosomal_L28"/>
    <property type="match status" value="1"/>
</dbReference>
<dbReference type="SUPFAM" id="SSF143800">
    <property type="entry name" value="L28p-like"/>
    <property type="match status" value="1"/>
</dbReference>
<sequence length="96" mass="10576">MSRSCELTGKGVQSGNNVSHANNKTKRKFLPNLCNVTLISDALGQRFRLRVSAAALRSVEHRGGLDAFLLKADENELSMRARLLRRQIVKKAAEAA</sequence>
<reference key="1">
    <citation type="journal article" date="2001" name="Proc. Natl. Acad. Sci. U.S.A.">
        <title>Analysis of the chromosome sequence of the legume symbiont Sinorhizobium meliloti strain 1021.</title>
        <authorList>
            <person name="Capela D."/>
            <person name="Barloy-Hubler F."/>
            <person name="Gouzy J."/>
            <person name="Bothe G."/>
            <person name="Ampe F."/>
            <person name="Batut J."/>
            <person name="Boistard P."/>
            <person name="Becker A."/>
            <person name="Boutry M."/>
            <person name="Cadieu E."/>
            <person name="Dreano S."/>
            <person name="Gloux S."/>
            <person name="Godrie T."/>
            <person name="Goffeau A."/>
            <person name="Kahn D."/>
            <person name="Kiss E."/>
            <person name="Lelaure V."/>
            <person name="Masuy D."/>
            <person name="Pohl T."/>
            <person name="Portetelle D."/>
            <person name="Puehler A."/>
            <person name="Purnelle B."/>
            <person name="Ramsperger U."/>
            <person name="Renard C."/>
            <person name="Thebault P."/>
            <person name="Vandenbol M."/>
            <person name="Weidner S."/>
            <person name="Galibert F."/>
        </authorList>
    </citation>
    <scope>NUCLEOTIDE SEQUENCE [LARGE SCALE GENOMIC DNA]</scope>
    <source>
        <strain>1021</strain>
    </source>
</reference>
<reference key="2">
    <citation type="journal article" date="2001" name="Science">
        <title>The composite genome of the legume symbiont Sinorhizobium meliloti.</title>
        <authorList>
            <person name="Galibert F."/>
            <person name="Finan T.M."/>
            <person name="Long S.R."/>
            <person name="Puehler A."/>
            <person name="Abola P."/>
            <person name="Ampe F."/>
            <person name="Barloy-Hubler F."/>
            <person name="Barnett M.J."/>
            <person name="Becker A."/>
            <person name="Boistard P."/>
            <person name="Bothe G."/>
            <person name="Boutry M."/>
            <person name="Bowser L."/>
            <person name="Buhrmester J."/>
            <person name="Cadieu E."/>
            <person name="Capela D."/>
            <person name="Chain P."/>
            <person name="Cowie A."/>
            <person name="Davis R.W."/>
            <person name="Dreano S."/>
            <person name="Federspiel N.A."/>
            <person name="Fisher R.F."/>
            <person name="Gloux S."/>
            <person name="Godrie T."/>
            <person name="Goffeau A."/>
            <person name="Golding B."/>
            <person name="Gouzy J."/>
            <person name="Gurjal M."/>
            <person name="Hernandez-Lucas I."/>
            <person name="Hong A."/>
            <person name="Huizar L."/>
            <person name="Hyman R.W."/>
            <person name="Jones T."/>
            <person name="Kahn D."/>
            <person name="Kahn M.L."/>
            <person name="Kalman S."/>
            <person name="Keating D.H."/>
            <person name="Kiss E."/>
            <person name="Komp C."/>
            <person name="Lelaure V."/>
            <person name="Masuy D."/>
            <person name="Palm C."/>
            <person name="Peck M.C."/>
            <person name="Pohl T.M."/>
            <person name="Portetelle D."/>
            <person name="Purnelle B."/>
            <person name="Ramsperger U."/>
            <person name="Surzycki R."/>
            <person name="Thebault P."/>
            <person name="Vandenbol M."/>
            <person name="Vorhoelter F.J."/>
            <person name="Weidner S."/>
            <person name="Wells D.H."/>
            <person name="Wong K."/>
            <person name="Yeh K.-C."/>
            <person name="Batut J."/>
        </authorList>
    </citation>
    <scope>NUCLEOTIDE SEQUENCE [LARGE SCALE GENOMIC DNA]</scope>
    <source>
        <strain>1021</strain>
    </source>
</reference>
<feature type="chain" id="PRO_0000178536" description="Large ribosomal subunit protein bL28">
    <location>
        <begin position="1"/>
        <end position="96"/>
    </location>
</feature>
<feature type="region of interest" description="Disordered" evidence="2">
    <location>
        <begin position="1"/>
        <end position="24"/>
    </location>
</feature>
<feature type="compositionally biased region" description="Polar residues" evidence="2">
    <location>
        <begin position="1"/>
        <end position="22"/>
    </location>
</feature>
<accession>Q92MF4</accession>
<name>RL28_RHIME</name>
<protein>
    <recommendedName>
        <fullName evidence="1">Large ribosomal subunit protein bL28</fullName>
    </recommendedName>
    <alternativeName>
        <fullName evidence="3">50S ribosomal protein L28</fullName>
    </alternativeName>
</protein>
<evidence type="ECO:0000255" key="1">
    <source>
        <dbReference type="HAMAP-Rule" id="MF_00373"/>
    </source>
</evidence>
<evidence type="ECO:0000256" key="2">
    <source>
        <dbReference type="SAM" id="MobiDB-lite"/>
    </source>
</evidence>
<evidence type="ECO:0000305" key="3"/>
<comment type="similarity">
    <text evidence="1">Belongs to the bacterial ribosomal protein bL28 family.</text>
</comment>
<keyword id="KW-1185">Reference proteome</keyword>
<keyword id="KW-0687">Ribonucleoprotein</keyword>
<keyword id="KW-0689">Ribosomal protein</keyword>
<organism>
    <name type="scientific">Rhizobium meliloti (strain 1021)</name>
    <name type="common">Ensifer meliloti</name>
    <name type="synonym">Sinorhizobium meliloti</name>
    <dbReference type="NCBI Taxonomy" id="266834"/>
    <lineage>
        <taxon>Bacteria</taxon>
        <taxon>Pseudomonadati</taxon>
        <taxon>Pseudomonadota</taxon>
        <taxon>Alphaproteobacteria</taxon>
        <taxon>Hyphomicrobiales</taxon>
        <taxon>Rhizobiaceae</taxon>
        <taxon>Sinorhizobium/Ensifer group</taxon>
        <taxon>Sinorhizobium</taxon>
    </lineage>
</organism>
<gene>
    <name evidence="1" type="primary">rpmB</name>
    <name type="ordered locus">R02668</name>
    <name type="ORF">SMc00704</name>
</gene>